<reference key="1">
    <citation type="journal article" date="2004" name="Genome Res.">
        <title>The status, quality, and expansion of the NIH full-length cDNA project: the Mammalian Gene Collection (MGC).</title>
        <authorList>
            <consortium name="The MGC Project Team"/>
        </authorList>
    </citation>
    <scope>NUCLEOTIDE SEQUENCE [LARGE SCALE MRNA]</scope>
    <source>
        <tissue>Brain</tissue>
    </source>
</reference>
<reference key="2">
    <citation type="journal article" date="2021" name="Elife">
        <title>Evolutionarily conserved sperm factors, DCST1 and DCST2, are required for gamete fusion.</title>
        <authorList>
            <person name="Inoue N."/>
            <person name="Hagihara Y."/>
            <person name="Wada I."/>
        </authorList>
    </citation>
    <scope>FUNCTION</scope>
    <scope>TISSUE SPECIFICITY</scope>
    <scope>DEVELOPMENTAL STAGE</scope>
    <scope>DISRUPTION PHENOTYPE</scope>
</reference>
<reference key="3">
    <citation type="journal article" date="2022" name="Commun. Biol.">
        <title>Sperm membrane proteins DCST1 and DCST2 are required for sperm-egg interaction in mice and fish.</title>
        <authorList>
            <person name="Noda T."/>
            <person name="Blaha A."/>
            <person name="Fujihara Y."/>
            <person name="Gert K.R."/>
            <person name="Emori C."/>
            <person name="Deneke V.E."/>
            <person name="Oura S."/>
            <person name="Panser K."/>
            <person name="Lu Y."/>
            <person name="Berent S."/>
            <person name="Kodani M."/>
            <person name="Cabrera-Quio L.E."/>
            <person name="Pauli A."/>
            <person name="Ikawa M."/>
        </authorList>
    </citation>
    <scope>FUNCTION</scope>
    <scope>DISRUPTION PHENOTYPE</scope>
    <scope>INTERACTION WITH DCST1</scope>
    <scope>SUBCELLULAR LOCATION</scope>
</reference>
<protein>
    <recommendedName>
        <fullName evidence="5">E3 ubiquitin-protein ligase DCST1</fullName>
        <ecNumber evidence="1">2.3.2.27</ecNumber>
    </recommendedName>
    <alternativeName>
        <fullName>DC-STAMP domain-containing protein 1</fullName>
    </alternativeName>
    <alternativeName>
        <fullName evidence="5">RING-type E3 ubiquitin transferase</fullName>
    </alternativeName>
</protein>
<name>DCST1_MOUSE</name>
<keyword id="KW-1003">Cell membrane</keyword>
<keyword id="KW-0968">Cytoplasmic vesicle</keyword>
<keyword id="KW-0325">Glycoprotein</keyword>
<keyword id="KW-0391">Immunity</keyword>
<keyword id="KW-0399">Innate immunity</keyword>
<keyword id="KW-0472">Membrane</keyword>
<keyword id="KW-0479">Metal-binding</keyword>
<keyword id="KW-1185">Reference proteome</keyword>
<keyword id="KW-0808">Transferase</keyword>
<keyword id="KW-0812">Transmembrane</keyword>
<keyword id="KW-1133">Transmembrane helix</keyword>
<keyword id="KW-0833">Ubl conjugation pathway</keyword>
<keyword id="KW-0862">Zinc</keyword>
<keyword id="KW-0863">Zinc-finger</keyword>
<dbReference type="EC" id="2.3.2.27" evidence="1"/>
<dbReference type="EMBL" id="BC125478">
    <property type="protein sequence ID" value="AAI25479.1"/>
    <property type="molecule type" value="mRNA"/>
</dbReference>
<dbReference type="EMBL" id="BC125480">
    <property type="protein sequence ID" value="AAI25481.1"/>
    <property type="molecule type" value="mRNA"/>
</dbReference>
<dbReference type="CCDS" id="CCDS38490.1"/>
<dbReference type="RefSeq" id="NP_084250.1">
    <property type="nucleotide sequence ID" value="NM_029974.2"/>
</dbReference>
<dbReference type="BioGRID" id="218909">
    <property type="interactions" value="3"/>
</dbReference>
<dbReference type="FunCoup" id="Q059Y8">
    <property type="interactions" value="495"/>
</dbReference>
<dbReference type="STRING" id="10090.ENSMUSP00000065502"/>
<dbReference type="GlyCosmos" id="Q059Y8">
    <property type="glycosylation" value="5 sites, No reported glycans"/>
</dbReference>
<dbReference type="GlyGen" id="Q059Y8">
    <property type="glycosylation" value="6 sites"/>
</dbReference>
<dbReference type="iPTMnet" id="Q059Y8"/>
<dbReference type="PhosphoSitePlus" id="Q059Y8"/>
<dbReference type="PaxDb" id="10090-ENSMUSP00000065502"/>
<dbReference type="ProteomicsDB" id="279840"/>
<dbReference type="Antibodypedia" id="20409">
    <property type="antibodies" value="84 antibodies from 19 providers"/>
</dbReference>
<dbReference type="Ensembl" id="ENSMUST00000070820.7">
    <property type="protein sequence ID" value="ENSMUSP00000065502.7"/>
    <property type="gene ID" value="ENSMUSG00000042672.16"/>
</dbReference>
<dbReference type="GeneID" id="77772"/>
<dbReference type="KEGG" id="mmu:77772"/>
<dbReference type="UCSC" id="uc008pyy.1">
    <property type="organism name" value="mouse"/>
</dbReference>
<dbReference type="AGR" id="MGI:1925022"/>
<dbReference type="CTD" id="149095"/>
<dbReference type="MGI" id="MGI:1925022">
    <property type="gene designation" value="Dcst1"/>
</dbReference>
<dbReference type="VEuPathDB" id="HostDB:ENSMUSG00000042672"/>
<dbReference type="eggNOG" id="KOG3726">
    <property type="taxonomic scope" value="Eukaryota"/>
</dbReference>
<dbReference type="GeneTree" id="ENSGT00940000153269"/>
<dbReference type="HOGENOM" id="CLU_015030_1_1_1"/>
<dbReference type="InParanoid" id="Q059Y8"/>
<dbReference type="OMA" id="EHEVRFN"/>
<dbReference type="OrthoDB" id="5985669at2759"/>
<dbReference type="PhylomeDB" id="Q059Y8"/>
<dbReference type="TreeFam" id="TF318254"/>
<dbReference type="UniPathway" id="UPA00143"/>
<dbReference type="BioGRID-ORCS" id="77772">
    <property type="hits" value="0 hits in 77 CRISPR screens"/>
</dbReference>
<dbReference type="ChiTaRS" id="Dcst1">
    <property type="organism name" value="mouse"/>
</dbReference>
<dbReference type="PRO" id="PR:Q059Y8"/>
<dbReference type="Proteomes" id="UP000000589">
    <property type="component" value="Chromosome 3"/>
</dbReference>
<dbReference type="RNAct" id="Q059Y8">
    <property type="molecule type" value="protein"/>
</dbReference>
<dbReference type="Bgee" id="ENSMUSG00000042672">
    <property type="expression patterns" value="Expressed in spermatid and 46 other cell types or tissues"/>
</dbReference>
<dbReference type="GO" id="GO:0002080">
    <property type="term" value="C:acrosomal membrane"/>
    <property type="evidence" value="ECO:0007669"/>
    <property type="project" value="UniProtKB-SubCell"/>
</dbReference>
<dbReference type="GO" id="GO:0005886">
    <property type="term" value="C:plasma membrane"/>
    <property type="evidence" value="ECO:0007669"/>
    <property type="project" value="UniProtKB-SubCell"/>
</dbReference>
<dbReference type="GO" id="GO:0061630">
    <property type="term" value="F:ubiquitin protein ligase activity"/>
    <property type="evidence" value="ECO:0007669"/>
    <property type="project" value="Ensembl"/>
</dbReference>
<dbReference type="GO" id="GO:0008270">
    <property type="term" value="F:zinc ion binding"/>
    <property type="evidence" value="ECO:0007669"/>
    <property type="project" value="UniProtKB-KW"/>
</dbReference>
<dbReference type="GO" id="GO:0007342">
    <property type="term" value="P:fusion of sperm to egg plasma membrane involved in single fertilization"/>
    <property type="evidence" value="ECO:0000315"/>
    <property type="project" value="UniProtKB"/>
</dbReference>
<dbReference type="GO" id="GO:0045087">
    <property type="term" value="P:innate immune response"/>
    <property type="evidence" value="ECO:0007669"/>
    <property type="project" value="UniProtKB-KW"/>
</dbReference>
<dbReference type="GO" id="GO:0060339">
    <property type="term" value="P:negative regulation of type I interferon-mediated signaling pathway"/>
    <property type="evidence" value="ECO:0007669"/>
    <property type="project" value="Ensembl"/>
</dbReference>
<dbReference type="GO" id="GO:0016567">
    <property type="term" value="P:protein ubiquitination"/>
    <property type="evidence" value="ECO:0007669"/>
    <property type="project" value="UniProtKB-UniPathway"/>
</dbReference>
<dbReference type="GO" id="GO:0035036">
    <property type="term" value="P:sperm-egg recognition"/>
    <property type="evidence" value="ECO:0000315"/>
    <property type="project" value="UniProtKB"/>
</dbReference>
<dbReference type="GO" id="GO:0006511">
    <property type="term" value="P:ubiquitin-dependent protein catabolic process"/>
    <property type="evidence" value="ECO:0007669"/>
    <property type="project" value="Ensembl"/>
</dbReference>
<dbReference type="InterPro" id="IPR051856">
    <property type="entry name" value="CSR-E3_Ligase_Protein"/>
</dbReference>
<dbReference type="InterPro" id="IPR012858">
    <property type="entry name" value="DC_STAMP-like"/>
</dbReference>
<dbReference type="PANTHER" id="PTHR21041">
    <property type="entry name" value="DENDRITIC CELL-SPECIFIC TRANSMEMBRANE PROTEIN"/>
    <property type="match status" value="1"/>
</dbReference>
<dbReference type="PANTHER" id="PTHR21041:SF17">
    <property type="entry name" value="E3 UBIQUITIN-PROTEIN LIGASE DCST1"/>
    <property type="match status" value="1"/>
</dbReference>
<dbReference type="Pfam" id="PF07782">
    <property type="entry name" value="DC_STAMP"/>
    <property type="match status" value="1"/>
</dbReference>
<sequence length="732" mass="84332">MAFLSSTLHSLGIFEKISRIKEVLKNRLLDLTKRRDQAREQQRKRPHTIIQGLLLWSLPVSWIRFLWRQPGEFPVTAFLLGAGTGGLLAIGLFQLLVNPMNIYEEQKVVALYCLASLGAIGWGTSPHIRCASLLLVPKMLGKEGRLFVMGYALAAIYSGPAANLRSNINEVIASLGCTVELQINNTRSAWRVSTAPLRAVFKGMVGSKDSLNKEIQNVSTSFEEMDEQVKSDAGYSSEDWDKNRESTEMFGTSRVRPYLSTQMVYELRTRLRCIHVVNKAILSCYRWFDKKHKNCMRRIHLPLFNNMICVPMKFKFLCNIAKVIEIWCYKRIPVEGNFGQTYDSVNQSIHGLSGEFSANINLKEEKQSSMVGLNTTNWEHMGTEVRDYVRQQETYLQWAMGLLHVLLSCTFLLVFHSAFSYMDHYNWDIRFDNIYISTYFCQIDARRKKLGKQSLLPLRKAERKTVIFPFKATIQAWEMRYVIRELLETLPIVLLLLVLCAIDWALYSVFDTIRQHSFVQYSFRSSHKLEIKVEGDSILAKLLRKTIGALNTSSSTDVETNNMPCLPQPISLNARDYFKASLPTLLLVCLCLAQAFGYRLRRVIAAFYFPKREKKRALFFYNEFLKKRSAFTKLRRAAIVRRANQQKAPPHYLVEALYRRCPLLHRFMRQRCVVCQAMETPDSYVCPTPDCKALYCRSCWDDMQRLCPVCTPREELSSSAHSDSNDDAVYGD</sequence>
<organism>
    <name type="scientific">Mus musculus</name>
    <name type="common">Mouse</name>
    <dbReference type="NCBI Taxonomy" id="10090"/>
    <lineage>
        <taxon>Eukaryota</taxon>
        <taxon>Metazoa</taxon>
        <taxon>Chordata</taxon>
        <taxon>Craniata</taxon>
        <taxon>Vertebrata</taxon>
        <taxon>Euteleostomi</taxon>
        <taxon>Mammalia</taxon>
        <taxon>Eutheria</taxon>
        <taxon>Euarchontoglires</taxon>
        <taxon>Glires</taxon>
        <taxon>Rodentia</taxon>
        <taxon>Myomorpha</taxon>
        <taxon>Muroidea</taxon>
        <taxon>Muridae</taxon>
        <taxon>Murinae</taxon>
        <taxon>Mus</taxon>
        <taxon>Mus</taxon>
    </lineage>
</organism>
<evidence type="ECO:0000250" key="1">
    <source>
        <dbReference type="UniProtKB" id="Q5T197"/>
    </source>
</evidence>
<evidence type="ECO:0000255" key="2"/>
<evidence type="ECO:0000269" key="3">
    <source>
    </source>
</evidence>
<evidence type="ECO:0000269" key="4">
    <source>
    </source>
</evidence>
<evidence type="ECO:0000305" key="5"/>
<evidence type="ECO:0000305" key="6">
    <source>
    </source>
</evidence>
<gene>
    <name type="primary">Dcst1</name>
</gene>
<feature type="chain" id="PRO_0000278825" description="E3 ubiquitin-protein ligase DCST1">
    <location>
        <begin position="1"/>
        <end position="732"/>
    </location>
</feature>
<feature type="topological domain" description="Cytoplasmic" evidence="2">
    <location>
        <begin position="1"/>
        <end position="46"/>
    </location>
</feature>
<feature type="transmembrane region" description="Helical" evidence="2">
    <location>
        <begin position="47"/>
        <end position="67"/>
    </location>
</feature>
<feature type="topological domain" description="Extracellular" evidence="2">
    <location>
        <begin position="68"/>
        <end position="76"/>
    </location>
</feature>
<feature type="transmembrane region" description="Helical" evidence="2">
    <location>
        <begin position="77"/>
        <end position="97"/>
    </location>
</feature>
<feature type="topological domain" description="Cytoplasmic" evidence="2">
    <location>
        <begin position="98"/>
        <end position="107"/>
    </location>
</feature>
<feature type="transmembrane region" description="Helical" evidence="2">
    <location>
        <begin position="108"/>
        <end position="128"/>
    </location>
</feature>
<feature type="topological domain" description="Extracellular" evidence="2">
    <location>
        <begin position="129"/>
        <end position="394"/>
    </location>
</feature>
<feature type="transmembrane region" description="Helical" evidence="2">
    <location>
        <begin position="395"/>
        <end position="415"/>
    </location>
</feature>
<feature type="topological domain" description="Cytoplasmic" evidence="2">
    <location>
        <begin position="416"/>
        <end position="489"/>
    </location>
</feature>
<feature type="transmembrane region" description="Helical" evidence="2">
    <location>
        <begin position="490"/>
        <end position="510"/>
    </location>
</feature>
<feature type="topological domain" description="Extracellular" evidence="2">
    <location>
        <begin position="511"/>
        <end position="576"/>
    </location>
</feature>
<feature type="transmembrane region" description="Helical" evidence="2">
    <location>
        <begin position="577"/>
        <end position="597"/>
    </location>
</feature>
<feature type="topological domain" description="Cytoplasmic" evidence="2">
    <location>
        <begin position="598"/>
        <end position="732"/>
    </location>
</feature>
<feature type="zinc finger region" description="RING-type; degenerate">
    <location>
        <begin position="672"/>
        <end position="711"/>
    </location>
</feature>
<feature type="glycosylation site" description="N-linked (GlcNAc...) asparagine" evidence="2">
    <location>
        <position position="184"/>
    </location>
</feature>
<feature type="glycosylation site" description="N-linked (GlcNAc...) asparagine" evidence="2">
    <location>
        <position position="217"/>
    </location>
</feature>
<feature type="glycosylation site" description="N-linked (GlcNAc...) asparagine" evidence="2">
    <location>
        <position position="346"/>
    </location>
</feature>
<feature type="glycosylation site" description="N-linked (GlcNAc...) asparagine" evidence="2">
    <location>
        <position position="374"/>
    </location>
</feature>
<feature type="glycosylation site" description="N-linked (GlcNAc...) asparagine" evidence="2">
    <location>
        <position position="551"/>
    </location>
</feature>
<accession>Q059Y8</accession>
<comment type="function">
    <text evidence="1">E3 ubiquitin-protein ligase which mediates 'Lys-48'-linked ubiquitination of STAT2 and induces its proteasomal degradation thereby negatively regulating type-I-interferon signaling.</text>
</comment>
<comment type="function">
    <text evidence="3 4">Essential sperm cell-surface protein required for sperm-egg fusion and fertilization.</text>
</comment>
<comment type="catalytic activity">
    <reaction evidence="1">
        <text>S-ubiquitinyl-[E2 ubiquitin-conjugating enzyme]-L-cysteine + [acceptor protein]-L-lysine = [E2 ubiquitin-conjugating enzyme]-L-cysteine + N(6)-ubiquitinyl-[acceptor protein]-L-lysine.</text>
        <dbReference type="EC" id="2.3.2.27"/>
    </reaction>
</comment>
<comment type="pathway">
    <text evidence="1">Protein modification; protein ubiquitination.</text>
</comment>
<comment type="subunit">
    <text evidence="1 4">Interacts with STAT2; the interaction results in STAT2 'Lys-48'-linked ubiquitination leading to its proteasomal degradation. Interacts with DCST2 (PubMed:35393517).</text>
</comment>
<comment type="subcellular location">
    <subcellularLocation>
        <location evidence="1">Cell membrane</location>
        <topology evidence="1">Multi-pass membrane protein</topology>
    </subcellularLocation>
    <subcellularLocation>
        <location evidence="6">Cytoplasmic vesicle</location>
        <location evidence="6">Secretory vesicle</location>
        <location evidence="6">Acrosome membrane</location>
        <topology evidence="2">Multi-pass membrane protein</topology>
    </subcellularLocation>
    <text evidence="6">Localizes in the anterior acrosome before the acrosome reaction and then translocates to the equatorial segment in acrosome-reacted sperm.</text>
</comment>
<comment type="tissue specificity">
    <text evidence="3">Expressed in testis.</text>
</comment>
<comment type="developmental stage">
    <text evidence="3">In testis, not detected before 3 weeks after birth.</text>
</comment>
<comment type="domain">
    <text evidence="1">The RING-type zinc finger domain is responsible for E3 ubiquitin ligase activity.</text>
</comment>
<comment type="disruption phenotype">
    <text evidence="3 4">Knockout males are sterile despite normal mating behavior with ejaculation and vaginal plug formation (PubMed:33871360, PubMed:35393517). DCST1 and DCST2 double knockout males, but not females, are completely infertile. Mutants have no disturbances in sperm migration into the oviduct, acrosome reaction and zona penetration. Mutant spermatozoa are capable of binding to the plasma membranes of oocytes but fail to proceed to membrane fusion with oocytes (PubMed:33871360, PubMed:35393517).</text>
</comment>
<proteinExistence type="evidence at protein level"/>